<keyword id="KW-0167">Capsid protein</keyword>
<keyword id="KW-1176">Cytoplasmic inwards viral transport</keyword>
<keyword id="KW-1015">Disulfide bond</keyword>
<keyword id="KW-0238">DNA-binding</keyword>
<keyword id="KW-1039">Host endosome</keyword>
<keyword id="KW-1040">Host Golgi apparatus</keyword>
<keyword id="KW-1048">Host nucleus</keyword>
<keyword id="KW-0945">Host-virus interaction</keyword>
<keyword id="KW-0426">Late protein</keyword>
<keyword id="KW-1177">Microtubular inwards viral transport</keyword>
<keyword id="KW-0597">Phosphoprotein</keyword>
<keyword id="KW-1185">Reference proteome</keyword>
<keyword id="KW-1163">Viral penetration into host nucleus</keyword>
<keyword id="KW-0946">Virion</keyword>
<keyword id="KW-1160">Virus entry into host cell</keyword>
<accession>P03105</accession>
<reference key="1">
    <citation type="journal article" date="1982" name="EMBO J.">
        <title>Human papillomavirus 1a complete DNA sequence: a novel type of genome organization among papovaviridae.</title>
        <authorList>
            <person name="Danos O."/>
            <person name="Katinka M."/>
            <person name="Yaniv M."/>
        </authorList>
    </citation>
    <scope>NUCLEOTIDE SEQUENCE [GENOMIC DNA]</scope>
</reference>
<reference key="2">
    <citation type="submission" date="1985-01" db="EMBL/GenBank/DDBJ databases">
        <authorList>
            <person name="Danos O."/>
        </authorList>
    </citation>
    <scope>SEQUENCE REVISION</scope>
</reference>
<gene>
    <name evidence="1" type="primary">L2</name>
</gene>
<protein>
    <recommendedName>
        <fullName evidence="1">Minor capsid protein L2</fullName>
    </recommendedName>
</protein>
<dbReference type="EMBL" id="V01116">
    <property type="protein sequence ID" value="CAA24317.1"/>
    <property type="molecule type" value="Genomic_DNA"/>
</dbReference>
<dbReference type="PIR" id="A03646">
    <property type="entry name" value="P2WL"/>
</dbReference>
<dbReference type="RefSeq" id="NP_040308.1">
    <property type="nucleotide sequence ID" value="NC_001356.1"/>
</dbReference>
<dbReference type="MINT" id="P03105"/>
<dbReference type="GeneID" id="1489172"/>
<dbReference type="KEGG" id="vg:1489172"/>
<dbReference type="Proteomes" id="UP000006372">
    <property type="component" value="Segment"/>
</dbReference>
<dbReference type="GO" id="GO:0043657">
    <property type="term" value="C:host cell"/>
    <property type="evidence" value="ECO:0007669"/>
    <property type="project" value="GOC"/>
</dbReference>
<dbReference type="GO" id="GO:0044174">
    <property type="term" value="C:host cell endosome"/>
    <property type="evidence" value="ECO:0007669"/>
    <property type="project" value="UniProtKB-KW"/>
</dbReference>
<dbReference type="GO" id="GO:0044177">
    <property type="term" value="C:host cell Golgi apparatus"/>
    <property type="evidence" value="ECO:0007669"/>
    <property type="project" value="UniProtKB-SubCell"/>
</dbReference>
<dbReference type="GO" id="GO:0042025">
    <property type="term" value="C:host cell nucleus"/>
    <property type="evidence" value="ECO:0007669"/>
    <property type="project" value="UniProtKB-SubCell"/>
</dbReference>
<dbReference type="GO" id="GO:0019028">
    <property type="term" value="C:viral capsid"/>
    <property type="evidence" value="ECO:0007669"/>
    <property type="project" value="UniProtKB-UniRule"/>
</dbReference>
<dbReference type="GO" id="GO:0003677">
    <property type="term" value="F:DNA binding"/>
    <property type="evidence" value="ECO:0007669"/>
    <property type="project" value="UniProtKB-UniRule"/>
</dbReference>
<dbReference type="GO" id="GO:0005198">
    <property type="term" value="F:structural molecule activity"/>
    <property type="evidence" value="ECO:0007669"/>
    <property type="project" value="UniProtKB-UniRule"/>
</dbReference>
<dbReference type="GO" id="GO:0075521">
    <property type="term" value="P:microtubule-dependent intracellular transport of viral material towards nucleus"/>
    <property type="evidence" value="ECO:0007669"/>
    <property type="project" value="UniProtKB-UniRule"/>
</dbReference>
<dbReference type="GO" id="GO:0046718">
    <property type="term" value="P:symbiont entry into host cell"/>
    <property type="evidence" value="ECO:0007669"/>
    <property type="project" value="UniProtKB-KW"/>
</dbReference>
<dbReference type="GO" id="GO:0075732">
    <property type="term" value="P:viral penetration into host nucleus"/>
    <property type="evidence" value="ECO:0007669"/>
    <property type="project" value="UniProtKB-KW"/>
</dbReference>
<dbReference type="HAMAP" id="MF_04003">
    <property type="entry name" value="PPV_L2"/>
    <property type="match status" value="1"/>
</dbReference>
<dbReference type="InterPro" id="IPR000784">
    <property type="entry name" value="Late_L2"/>
</dbReference>
<dbReference type="Pfam" id="PF00513">
    <property type="entry name" value="Late_protein_L2"/>
    <property type="match status" value="1"/>
</dbReference>
<comment type="function">
    <text evidence="1">Minor protein of the capsid that localizes along the inner surface of the virion, within the central cavities beneath the L1 pentamers. Plays a role in capsid stabilization through interaction with the major capsid protein L1. Once the virion enters the host cell, L2 escorts the genomic DNA into the nucleus by promoting escape from the endosomal compartments and traffic through the host Golgi network. Mechanistically, the C-terminus of L2 possesses a cell-penetrating peptide that protudes from the host endosome, interacts with host cytoplasmic retromer cargo and thereby mediates the capsid delivery to the host trans-Golgi network. Plays a role through its interaction with host dynein in the intracellular microtubule-dependent transport of viral capsid toward the nucleus. Mediates the viral genome import into the nucleus through binding to host importins. Once within the nucleus, L2 localizes viral genomes to host PML bodies in order to activate early gene expression for establishment of infection. Later on, promotes late gene expression by interacting with the viral E2 protein and by inhibiting its transcriptional activation functions. During virion assembly, encapsidates the genome by direct interaction with the viral DNA.</text>
</comment>
<comment type="subunit">
    <text evidence="1">Interacts with major capsid protein L1. Interacts with E2; this interaction inhibits E2 transcriptional activity but not the DNA replication function E2. Interacts with host GADD45GIP1. Interacts with host HSPA8; this interaction is required for L2 nuclear translocation. Interacts with host importins KPNB2 and KPNB3. Forms a complex with importin alpha2-beta1 heterodimers via interaction with the importin alpha2 adapter. Interacts with host DYNLT1; this interaction is essential for virus intracellular transport during entry. Interacts (via C-terminus) with host retromer subunits VPS35 and VPS29.</text>
</comment>
<comment type="subcellular location">
    <subcellularLocation>
        <location evidence="1">Virion</location>
    </subcellularLocation>
    <subcellularLocation>
        <location evidence="1">Host nucleus</location>
    </subcellularLocation>
    <subcellularLocation>
        <location evidence="1">Host early endosome</location>
    </subcellularLocation>
    <subcellularLocation>
        <location evidence="1">Host Golgi apparatus</location>
    </subcellularLocation>
</comment>
<comment type="PTM">
    <text evidence="1">Highly phosphorylated.</text>
</comment>
<comment type="similarity">
    <text evidence="1">Belongs to the papillomaviridae L2 protein family.</text>
</comment>
<proteinExistence type="inferred from homology"/>
<organism>
    <name type="scientific">Human papillomavirus type 1</name>
    <name type="common">Human papillomavirus type 1a</name>
    <dbReference type="NCBI Taxonomy" id="10583"/>
    <lineage>
        <taxon>Viruses</taxon>
        <taxon>Monodnaviria</taxon>
        <taxon>Shotokuvirae</taxon>
        <taxon>Cossaviricota</taxon>
        <taxon>Papovaviricetes</taxon>
        <taxon>Zurhausenvirales</taxon>
        <taxon>Papillomaviridae</taxon>
        <taxon>Firstpapillomavirinae</taxon>
        <taxon>Mupapillomavirus</taxon>
        <taxon>Mupapillomavirus 1</taxon>
    </lineage>
</organism>
<name>VL2_HPV1</name>
<sequence>MYRLRRKRAAPKDIYPSCKISNTCPPDIQNKIEHTTIADKILQYGSLGVFLGGLGIGTARGSGGRIGYTPLGEGGGVRVATRPTPVRPTIPVETVGPSEIFPIDVVDPTGPAVIPLQDLGRDFPIPTVQVIAEIHPISDIPNIVASSTNEGESAILDVLRGNATIRTVSRTQYNNPSFTVASTSNISAGEASTSDIVFVSNGSGDRVVGEDIPLVELNLGLETDTSSVVQETAFSSSTPIAERPSFRPSRFYNRRLYEQVQVQDPRFVEQPQSMVTFDNPAFEPELDEVSIIFQRDLDALAQTPVPEFRDVVYLSKPTFSREPGGRLRVSRLGKSSTIRTRLGTAIGARTHFFYDLSSIAPEDSIELLPLGEHSQTTVISSNLGDTAFIQGETAEDDLEVISLETPQLYSEEELLDTNESVGENLQLTITNSEGEVSILDLTQSRVRPPFGTEDTSLHVYYPNSSKGTPIINPEESFTPLVIIALNNSTGDFELHPSLRKRRKRAYV</sequence>
<feature type="chain" id="PRO_0000133566" description="Minor capsid protein L2">
    <location>
        <begin position="1"/>
        <end position="507"/>
    </location>
</feature>
<feature type="short sequence motif" description="Nuclear localization signal" evidence="1">
    <location>
        <begin position="1"/>
        <end position="9"/>
    </location>
</feature>
<feature type="short sequence motif" description="Nuclear localization signal" evidence="1">
    <location>
        <begin position="500"/>
        <end position="506"/>
    </location>
</feature>
<feature type="disulfide bond" evidence="1">
    <location>
        <begin position="18"/>
        <end position="24"/>
    </location>
</feature>
<evidence type="ECO:0000255" key="1">
    <source>
        <dbReference type="HAMAP-Rule" id="MF_04003"/>
    </source>
</evidence>
<organismHost>
    <name type="scientific">Homo sapiens</name>
    <name type="common">Human</name>
    <dbReference type="NCBI Taxonomy" id="9606"/>
</organismHost>